<feature type="signal peptide" evidence="3">
    <location>
        <begin position="1"/>
        <end position="25"/>
    </location>
</feature>
<feature type="chain" id="PRO_0000004203" description="Calnexin homolog 2">
    <location>
        <begin position="26"/>
        <end position="532"/>
    </location>
</feature>
<feature type="topological domain" description="Lumenal" evidence="3">
    <location>
        <begin position="26"/>
        <end position="468"/>
    </location>
</feature>
<feature type="transmembrane region" description="Helical" evidence="3">
    <location>
        <begin position="469"/>
        <end position="489"/>
    </location>
</feature>
<feature type="topological domain" description="Cytoplasmic" evidence="3">
    <location>
        <begin position="490"/>
        <end position="532"/>
    </location>
</feature>
<feature type="repeat" description="1-1">
    <location>
        <begin position="227"/>
        <end position="238"/>
    </location>
</feature>
<feature type="repeat" description="1-2">
    <location>
        <begin position="244"/>
        <end position="255"/>
    </location>
</feature>
<feature type="repeat" description="1-3">
    <location>
        <begin position="263"/>
        <end position="274"/>
    </location>
</feature>
<feature type="repeat" description="1-4">
    <location>
        <begin position="282"/>
        <end position="293"/>
    </location>
</feature>
<feature type="repeat" description="2-1">
    <location>
        <begin position="297"/>
        <end position="307"/>
    </location>
</feature>
<feature type="repeat" description="2-2">
    <location>
        <begin position="316"/>
        <end position="326"/>
    </location>
</feature>
<feature type="repeat" description="2-3">
    <location>
        <begin position="330"/>
        <end position="340"/>
    </location>
</feature>
<feature type="repeat" description="2-4">
    <location>
        <begin position="344"/>
        <end position="354"/>
    </location>
</feature>
<feature type="region of interest" description="Disordered" evidence="4">
    <location>
        <begin position="208"/>
        <end position="302"/>
    </location>
</feature>
<feature type="region of interest" description="P domain (Extended arm)" evidence="1">
    <location>
        <begin position="225"/>
        <end position="358"/>
    </location>
</feature>
<feature type="region of interest" description="4 X approximate repeats">
    <location>
        <begin position="227"/>
        <end position="293"/>
    </location>
</feature>
<feature type="region of interest" description="4 X approximate repeats">
    <location>
        <begin position="297"/>
        <end position="354"/>
    </location>
</feature>
<feature type="region of interest" description="Disordered" evidence="4">
    <location>
        <begin position="493"/>
        <end position="532"/>
    </location>
</feature>
<feature type="compositionally biased region" description="Basic and acidic residues" evidence="4">
    <location>
        <begin position="226"/>
        <end position="242"/>
    </location>
</feature>
<feature type="compositionally biased region" description="Acidic residues" evidence="4">
    <location>
        <begin position="252"/>
        <end position="283"/>
    </location>
</feature>
<feature type="compositionally biased region" description="Acidic residues" evidence="4">
    <location>
        <begin position="290"/>
        <end position="299"/>
    </location>
</feature>
<feature type="compositionally biased region" description="Basic residues" evidence="4">
    <location>
        <begin position="523"/>
        <end position="532"/>
    </location>
</feature>
<feature type="binding site" evidence="1">
    <location>
        <position position="34"/>
    </location>
    <ligand>
        <name>Ca(2+)</name>
        <dbReference type="ChEBI" id="CHEBI:29108"/>
    </ligand>
</feature>
<feature type="binding site" evidence="1">
    <location>
        <position position="65"/>
    </location>
    <ligand>
        <name>Ca(2+)</name>
        <dbReference type="ChEBI" id="CHEBI:29108"/>
    </ligand>
</feature>
<feature type="binding site" evidence="2">
    <location>
        <position position="114"/>
    </location>
    <ligand>
        <name>an alpha-D-glucoside</name>
        <dbReference type="ChEBI" id="CHEBI:22390"/>
    </ligand>
</feature>
<feature type="binding site" evidence="2">
    <location>
        <position position="116"/>
    </location>
    <ligand>
        <name>an alpha-D-glucoside</name>
        <dbReference type="ChEBI" id="CHEBI:22390"/>
    </ligand>
</feature>
<feature type="binding site" evidence="2">
    <location>
        <position position="136"/>
    </location>
    <ligand>
        <name>an alpha-D-glucoside</name>
        <dbReference type="ChEBI" id="CHEBI:22390"/>
    </ligand>
</feature>
<feature type="binding site" evidence="2">
    <location>
        <position position="143"/>
    </location>
    <ligand>
        <name>an alpha-D-glucoside</name>
        <dbReference type="ChEBI" id="CHEBI:22390"/>
    </ligand>
</feature>
<feature type="binding site" evidence="2">
    <location>
        <position position="373"/>
    </location>
    <ligand>
        <name>an alpha-D-glucoside</name>
        <dbReference type="ChEBI" id="CHEBI:22390"/>
    </ligand>
</feature>
<feature type="binding site" evidence="1">
    <location>
        <position position="384"/>
    </location>
    <ligand>
        <name>Ca(2+)</name>
        <dbReference type="ChEBI" id="CHEBI:29108"/>
    </ligand>
</feature>
<feature type="glycosylation site" description="N-linked (GlcNAc...) asparagine" evidence="3">
    <location>
        <position position="466"/>
    </location>
</feature>
<feature type="disulfide bond" evidence="1">
    <location>
        <begin position="110"/>
        <end position="145"/>
    </location>
</feature>
<feature type="disulfide bond" evidence="1">
    <location>
        <begin position="309"/>
        <end position="315"/>
    </location>
</feature>
<feature type="sequence conflict" description="In Ref. 1; AAA17742." evidence="5" ref="1">
    <original>I</original>
    <variation>V</variation>
    <location>
        <position position="30"/>
    </location>
</feature>
<feature type="sequence conflict" description="In Ref. 1; AAA17742." evidence="5" ref="1">
    <original>M</original>
    <variation>K</variation>
    <location>
        <position position="180"/>
    </location>
</feature>
<reference key="1">
    <citation type="journal article" date="1994" name="Plant Physiol.">
        <title>Genomic sequence of a calnexin homolog from Arabidopsis thaliana.</title>
        <authorList>
            <person name="Boyce J.M."/>
            <person name="Coates D."/>
            <person name="Fricker M.D."/>
            <person name="Evans D.E."/>
        </authorList>
    </citation>
    <scope>NUCLEOTIDE SEQUENCE [GENOMIC DNA]</scope>
    <source>
        <strain>cv. Columbia</strain>
    </source>
</reference>
<reference key="2">
    <citation type="journal article" date="2000" name="Nature">
        <title>Sequence and analysis of chromosome 5 of the plant Arabidopsis thaliana.</title>
        <authorList>
            <person name="Tabata S."/>
            <person name="Kaneko T."/>
            <person name="Nakamura Y."/>
            <person name="Kotani H."/>
            <person name="Kato T."/>
            <person name="Asamizu E."/>
            <person name="Miyajima N."/>
            <person name="Sasamoto S."/>
            <person name="Kimura T."/>
            <person name="Hosouchi T."/>
            <person name="Kawashima K."/>
            <person name="Kohara M."/>
            <person name="Matsumoto M."/>
            <person name="Matsuno A."/>
            <person name="Muraki A."/>
            <person name="Nakayama S."/>
            <person name="Nakazaki N."/>
            <person name="Naruo K."/>
            <person name="Okumura S."/>
            <person name="Shinpo S."/>
            <person name="Takeuchi C."/>
            <person name="Wada T."/>
            <person name="Watanabe A."/>
            <person name="Yamada M."/>
            <person name="Yasuda M."/>
            <person name="Sato S."/>
            <person name="de la Bastide M."/>
            <person name="Huang E."/>
            <person name="Spiegel L."/>
            <person name="Gnoj L."/>
            <person name="O'Shaughnessy A."/>
            <person name="Preston R."/>
            <person name="Habermann K."/>
            <person name="Murray J."/>
            <person name="Johnson D."/>
            <person name="Rohlfing T."/>
            <person name="Nelson J."/>
            <person name="Stoneking T."/>
            <person name="Pepin K."/>
            <person name="Spieth J."/>
            <person name="Sekhon M."/>
            <person name="Armstrong J."/>
            <person name="Becker M."/>
            <person name="Belter E."/>
            <person name="Cordum H."/>
            <person name="Cordes M."/>
            <person name="Courtney L."/>
            <person name="Courtney W."/>
            <person name="Dante M."/>
            <person name="Du H."/>
            <person name="Edwards J."/>
            <person name="Fryman J."/>
            <person name="Haakensen B."/>
            <person name="Lamar E."/>
            <person name="Latreille P."/>
            <person name="Leonard S."/>
            <person name="Meyer R."/>
            <person name="Mulvaney E."/>
            <person name="Ozersky P."/>
            <person name="Riley A."/>
            <person name="Strowmatt C."/>
            <person name="Wagner-McPherson C."/>
            <person name="Wollam A."/>
            <person name="Yoakum M."/>
            <person name="Bell M."/>
            <person name="Dedhia N."/>
            <person name="Parnell L."/>
            <person name="Shah R."/>
            <person name="Rodriguez M."/>
            <person name="Hoon See L."/>
            <person name="Vil D."/>
            <person name="Baker J."/>
            <person name="Kirchoff K."/>
            <person name="Toth K."/>
            <person name="King L."/>
            <person name="Bahret A."/>
            <person name="Miller B."/>
            <person name="Marra M.A."/>
            <person name="Martienssen R."/>
            <person name="McCombie W.R."/>
            <person name="Wilson R.K."/>
            <person name="Murphy G."/>
            <person name="Bancroft I."/>
            <person name="Volckaert G."/>
            <person name="Wambutt R."/>
            <person name="Duesterhoeft A."/>
            <person name="Stiekema W."/>
            <person name="Pohl T."/>
            <person name="Entian K.-D."/>
            <person name="Terryn N."/>
            <person name="Hartley N."/>
            <person name="Bent E."/>
            <person name="Johnson S."/>
            <person name="Langham S.-A."/>
            <person name="McCullagh B."/>
            <person name="Robben J."/>
            <person name="Grymonprez B."/>
            <person name="Zimmermann W."/>
            <person name="Ramsperger U."/>
            <person name="Wedler H."/>
            <person name="Balke K."/>
            <person name="Wedler E."/>
            <person name="Peters S."/>
            <person name="van Staveren M."/>
            <person name="Dirkse W."/>
            <person name="Mooijman P."/>
            <person name="Klein Lankhorst R."/>
            <person name="Weitzenegger T."/>
            <person name="Bothe G."/>
            <person name="Rose M."/>
            <person name="Hauf J."/>
            <person name="Berneiser S."/>
            <person name="Hempel S."/>
            <person name="Feldpausch M."/>
            <person name="Lamberth S."/>
            <person name="Villarroel R."/>
            <person name="Gielen J."/>
            <person name="Ardiles W."/>
            <person name="Bents O."/>
            <person name="Lemcke K."/>
            <person name="Kolesov G."/>
            <person name="Mayer K.F.X."/>
            <person name="Rudd S."/>
            <person name="Schoof H."/>
            <person name="Schueller C."/>
            <person name="Zaccaria P."/>
            <person name="Mewes H.-W."/>
            <person name="Bevan M."/>
            <person name="Fransz P.F."/>
        </authorList>
    </citation>
    <scope>NUCLEOTIDE SEQUENCE [LARGE SCALE GENOMIC DNA]</scope>
    <source>
        <strain>cv. Columbia</strain>
    </source>
</reference>
<reference key="3">
    <citation type="journal article" date="2017" name="Plant J.">
        <title>Araport11: a complete reannotation of the Arabidopsis thaliana reference genome.</title>
        <authorList>
            <person name="Cheng C.Y."/>
            <person name="Krishnakumar V."/>
            <person name="Chan A.P."/>
            <person name="Thibaud-Nissen F."/>
            <person name="Schobel S."/>
            <person name="Town C.D."/>
        </authorList>
    </citation>
    <scope>GENOME REANNOTATION</scope>
    <source>
        <strain>cv. Columbia</strain>
    </source>
</reference>
<reference key="4">
    <citation type="journal article" date="2003" name="Science">
        <title>Empirical analysis of transcriptional activity in the Arabidopsis genome.</title>
        <authorList>
            <person name="Yamada K."/>
            <person name="Lim J."/>
            <person name="Dale J.M."/>
            <person name="Chen H."/>
            <person name="Shinn P."/>
            <person name="Palm C.J."/>
            <person name="Southwick A.M."/>
            <person name="Wu H.C."/>
            <person name="Kim C.J."/>
            <person name="Nguyen M."/>
            <person name="Pham P.K."/>
            <person name="Cheuk R.F."/>
            <person name="Karlin-Newmann G."/>
            <person name="Liu S.X."/>
            <person name="Lam B."/>
            <person name="Sakano H."/>
            <person name="Wu T."/>
            <person name="Yu G."/>
            <person name="Miranda M."/>
            <person name="Quach H.L."/>
            <person name="Tripp M."/>
            <person name="Chang C.H."/>
            <person name="Lee J.M."/>
            <person name="Toriumi M.J."/>
            <person name="Chan M.M."/>
            <person name="Tang C.C."/>
            <person name="Onodera C.S."/>
            <person name="Deng J.M."/>
            <person name="Akiyama K."/>
            <person name="Ansari Y."/>
            <person name="Arakawa T."/>
            <person name="Banh J."/>
            <person name="Banno F."/>
            <person name="Bowser L."/>
            <person name="Brooks S.Y."/>
            <person name="Carninci P."/>
            <person name="Chao Q."/>
            <person name="Choy N."/>
            <person name="Enju A."/>
            <person name="Goldsmith A.D."/>
            <person name="Gurjal M."/>
            <person name="Hansen N.F."/>
            <person name="Hayashizaki Y."/>
            <person name="Johnson-Hopson C."/>
            <person name="Hsuan V.W."/>
            <person name="Iida K."/>
            <person name="Karnes M."/>
            <person name="Khan S."/>
            <person name="Koesema E."/>
            <person name="Ishida J."/>
            <person name="Jiang P.X."/>
            <person name="Jones T."/>
            <person name="Kawai J."/>
            <person name="Kamiya A."/>
            <person name="Meyers C."/>
            <person name="Nakajima M."/>
            <person name="Narusaka M."/>
            <person name="Seki M."/>
            <person name="Sakurai T."/>
            <person name="Satou M."/>
            <person name="Tamse R."/>
            <person name="Vaysberg M."/>
            <person name="Wallender E.K."/>
            <person name="Wong C."/>
            <person name="Yamamura Y."/>
            <person name="Yuan S."/>
            <person name="Shinozaki K."/>
            <person name="Davis R.W."/>
            <person name="Theologis A."/>
            <person name="Ecker J.R."/>
        </authorList>
    </citation>
    <scope>NUCLEOTIDE SEQUENCE [LARGE SCALE MRNA]</scope>
    <source>
        <strain>cv. Columbia</strain>
    </source>
</reference>
<keyword id="KW-0025">Alternative splicing</keyword>
<keyword id="KW-0106">Calcium</keyword>
<keyword id="KW-0143">Chaperone</keyword>
<keyword id="KW-1015">Disulfide bond</keyword>
<keyword id="KW-0256">Endoplasmic reticulum</keyword>
<keyword id="KW-0325">Glycoprotein</keyword>
<keyword id="KW-0430">Lectin</keyword>
<keyword id="KW-0472">Membrane</keyword>
<keyword id="KW-0479">Metal-binding</keyword>
<keyword id="KW-1185">Reference proteome</keyword>
<keyword id="KW-0677">Repeat</keyword>
<keyword id="KW-0732">Signal</keyword>
<keyword id="KW-0812">Transmembrane</keyword>
<keyword id="KW-1133">Transmembrane helix</keyword>
<sequence>MRERIITFVSLLLVALLSFPSVSYCDDQTILYESFDEPFDGRWVVSEKAEYQGVWKHEKSEGHDDYGLLVSEKAKKYGIVKELDVDEPLNLNEGTVVLQYEARFQEGLECGGAYLKYLRPQEAGWVPQGFDNDSPYSIMFGPDKCGATNKVHFILKHKNPKSGEFVEHHLKFPPSVPFDMLSHVYTAVLKSDNEVRILVDGEEKKKGNLLSAEDFEPPLIPSKTIPDPEDKKPEDWDERAKIPDPNAVKPDDWDEDAPMEIEDEEAEKPEGWLDDEPVEVEDPEASKPEDWDDEEDGEWEAPKVSNTKCEAAPGCGEWKRPMKRNPAYKGKWSSPLIDNPAYKGIWKPRDIPNPDYFELERPNLEPIAAIGIEIWTMQDGILFDNILISKDEKVAETYRQSTWKPKFDVEKEKQKAEDEAAGEADGLKSYQKKVFDLLYKVADISFLSAYKSKIMELIEKAETQPNLTIGVLISIVIVFLSLFFKLIFGGAKAKVEKKKPETAAETSTSEAKTEEKAEAVAAPRKRQTRRES</sequence>
<protein>
    <recommendedName>
        <fullName>Calnexin homolog 2</fullName>
    </recommendedName>
</protein>
<evidence type="ECO:0000250" key="1"/>
<evidence type="ECO:0000250" key="2">
    <source>
        <dbReference type="UniProtKB" id="P14211"/>
    </source>
</evidence>
<evidence type="ECO:0000255" key="3"/>
<evidence type="ECO:0000256" key="4">
    <source>
        <dbReference type="SAM" id="MobiDB-lite"/>
    </source>
</evidence>
<evidence type="ECO:0000305" key="5"/>
<gene>
    <name type="ordered locus">At5g07340</name>
    <name type="ORF">T2I1_50</name>
</gene>
<name>CALX2_ARATH</name>
<dbReference type="EMBL" id="U08315">
    <property type="protein sequence ID" value="AAA17742.1"/>
    <property type="status" value="ALT_SEQ"/>
    <property type="molecule type" value="Genomic_DNA"/>
</dbReference>
<dbReference type="EMBL" id="AL163912">
    <property type="protein sequence ID" value="CAB87923.1"/>
    <property type="molecule type" value="Genomic_DNA"/>
</dbReference>
<dbReference type="EMBL" id="CP002688">
    <property type="protein sequence ID" value="AED91138.1"/>
    <property type="molecule type" value="Genomic_DNA"/>
</dbReference>
<dbReference type="EMBL" id="BT001999">
    <property type="protein sequence ID" value="AAN72010.1"/>
    <property type="molecule type" value="mRNA"/>
</dbReference>
<dbReference type="EMBL" id="BT010385">
    <property type="protein sequence ID" value="AAQ56828.1"/>
    <property type="molecule type" value="mRNA"/>
</dbReference>
<dbReference type="PIR" id="T49873">
    <property type="entry name" value="T49873"/>
</dbReference>
<dbReference type="RefSeq" id="NP_196351.1">
    <molecule id="Q38798-1"/>
    <property type="nucleotide sequence ID" value="NM_120816.3"/>
</dbReference>
<dbReference type="SMR" id="Q38798"/>
<dbReference type="BioGRID" id="15904">
    <property type="interactions" value="48"/>
</dbReference>
<dbReference type="FunCoup" id="Q38798">
    <property type="interactions" value="2676"/>
</dbReference>
<dbReference type="IntAct" id="Q38798">
    <property type="interactions" value="19"/>
</dbReference>
<dbReference type="STRING" id="3702.Q38798"/>
<dbReference type="GlyGen" id="Q38798">
    <property type="glycosylation" value="1 site"/>
</dbReference>
<dbReference type="SwissPalm" id="Q38798"/>
<dbReference type="PaxDb" id="3702-AT5G07340.2"/>
<dbReference type="ProteomicsDB" id="239190">
    <molecule id="Q38798-1"/>
</dbReference>
<dbReference type="EnsemblPlants" id="AT5G07340.1">
    <molecule id="Q38798-1"/>
    <property type="protein sequence ID" value="AT5G07340.1"/>
    <property type="gene ID" value="AT5G07340"/>
</dbReference>
<dbReference type="GeneID" id="830625"/>
<dbReference type="Gramene" id="AT5G07340.1">
    <molecule id="Q38798-1"/>
    <property type="protein sequence ID" value="AT5G07340.1"/>
    <property type="gene ID" value="AT5G07340"/>
</dbReference>
<dbReference type="KEGG" id="ath:AT5G07340"/>
<dbReference type="Araport" id="AT5G07340"/>
<dbReference type="TAIR" id="AT5G07340"/>
<dbReference type="eggNOG" id="KOG0675">
    <property type="taxonomic scope" value="Eukaryota"/>
</dbReference>
<dbReference type="HOGENOM" id="CLU_018224_1_0_1"/>
<dbReference type="InParanoid" id="Q38798"/>
<dbReference type="OMA" id="QESWITN"/>
<dbReference type="PhylomeDB" id="Q38798"/>
<dbReference type="CD-CODE" id="4299E36E">
    <property type="entry name" value="Nucleolus"/>
</dbReference>
<dbReference type="PRO" id="PR:Q38798"/>
<dbReference type="Proteomes" id="UP000006548">
    <property type="component" value="Chromosome 5"/>
</dbReference>
<dbReference type="ExpressionAtlas" id="Q38798">
    <property type="expression patterns" value="baseline and differential"/>
</dbReference>
<dbReference type="GO" id="GO:0005789">
    <property type="term" value="C:endoplasmic reticulum membrane"/>
    <property type="evidence" value="ECO:0007669"/>
    <property type="project" value="UniProtKB-SubCell"/>
</dbReference>
<dbReference type="GO" id="GO:0005509">
    <property type="term" value="F:calcium ion binding"/>
    <property type="evidence" value="ECO:0007669"/>
    <property type="project" value="InterPro"/>
</dbReference>
<dbReference type="GO" id="GO:0030246">
    <property type="term" value="F:carbohydrate binding"/>
    <property type="evidence" value="ECO:0007669"/>
    <property type="project" value="UniProtKB-KW"/>
</dbReference>
<dbReference type="GO" id="GO:0051082">
    <property type="term" value="F:unfolded protein binding"/>
    <property type="evidence" value="ECO:0007669"/>
    <property type="project" value="InterPro"/>
</dbReference>
<dbReference type="GO" id="GO:0006457">
    <property type="term" value="P:protein folding"/>
    <property type="evidence" value="ECO:0007669"/>
    <property type="project" value="InterPro"/>
</dbReference>
<dbReference type="FunFam" id="2.10.250.10:FF:000001">
    <property type="entry name" value="Calnexin homolog"/>
    <property type="match status" value="1"/>
</dbReference>
<dbReference type="FunFam" id="2.60.120.200:FF:000048">
    <property type="entry name" value="Calnexin homolog"/>
    <property type="match status" value="1"/>
</dbReference>
<dbReference type="Gene3D" id="2.60.120.200">
    <property type="match status" value="1"/>
</dbReference>
<dbReference type="Gene3D" id="2.10.250.10">
    <property type="entry name" value="Calreticulin/calnexin, P domain"/>
    <property type="match status" value="1"/>
</dbReference>
<dbReference type="InterPro" id="IPR001580">
    <property type="entry name" value="Calret/calnex"/>
</dbReference>
<dbReference type="InterPro" id="IPR018124">
    <property type="entry name" value="Calret/calnex_CS"/>
</dbReference>
<dbReference type="InterPro" id="IPR009033">
    <property type="entry name" value="Calreticulin/calnexin_P_dom_sf"/>
</dbReference>
<dbReference type="InterPro" id="IPR013320">
    <property type="entry name" value="ConA-like_dom_sf"/>
</dbReference>
<dbReference type="PANTHER" id="PTHR11073:SF1">
    <property type="entry name" value="CALNEXIN 14D-RELATED"/>
    <property type="match status" value="1"/>
</dbReference>
<dbReference type="PANTHER" id="PTHR11073">
    <property type="entry name" value="CALRETICULIN AND CALNEXIN"/>
    <property type="match status" value="1"/>
</dbReference>
<dbReference type="Pfam" id="PF00262">
    <property type="entry name" value="Calreticulin"/>
    <property type="match status" value="1"/>
</dbReference>
<dbReference type="PRINTS" id="PR00626">
    <property type="entry name" value="CALRETICULIN"/>
</dbReference>
<dbReference type="SUPFAM" id="SSF49899">
    <property type="entry name" value="Concanavalin A-like lectins/glucanases"/>
    <property type="match status" value="1"/>
</dbReference>
<dbReference type="SUPFAM" id="SSF63887">
    <property type="entry name" value="P-domain of calnexin/calreticulin"/>
    <property type="match status" value="1"/>
</dbReference>
<dbReference type="PROSITE" id="PS00803">
    <property type="entry name" value="CALRETICULIN_1"/>
    <property type="match status" value="1"/>
</dbReference>
<dbReference type="PROSITE" id="PS00804">
    <property type="entry name" value="CALRETICULIN_2"/>
    <property type="match status" value="1"/>
</dbReference>
<dbReference type="PROSITE" id="PS00805">
    <property type="entry name" value="CALRETICULIN_REPEAT"/>
    <property type="match status" value="3"/>
</dbReference>
<comment type="function">
    <text evidence="1">Calcium-binding protein that interacts with newly synthesized monoglucosylated glycoproteins in the endoplasmic reticulum. It may act in assisting protein assembly and/or in the retention within the ER of unassembled protein subunits. It seems to play a major role in the quality control apparatus of the ER by the retention of incorrectly folded proteins (By similarity).</text>
</comment>
<comment type="subcellular location">
    <subcellularLocation>
        <location evidence="1">Endoplasmic reticulum membrane</location>
        <topology evidence="1">Single-pass type I membrane protein</topology>
    </subcellularLocation>
</comment>
<comment type="alternative products">
    <event type="alternative splicing"/>
    <isoform>
        <id>Q38798-1</id>
        <name>1</name>
        <sequence type="displayed"/>
    </isoform>
    <text>A number of isoforms are produced. According to EST sequences.</text>
</comment>
<comment type="similarity">
    <text evidence="5">Belongs to the calreticulin family.</text>
</comment>
<comment type="sequence caution" evidence="5">
    <conflict type="erroneous gene model prediction">
        <sequence resource="EMBL-CDS" id="AAA17742"/>
    </conflict>
</comment>
<proteinExistence type="evidence at transcript level"/>
<accession>Q38798</accession>
<accession>Q9LY26</accession>
<organism>
    <name type="scientific">Arabidopsis thaliana</name>
    <name type="common">Mouse-ear cress</name>
    <dbReference type="NCBI Taxonomy" id="3702"/>
    <lineage>
        <taxon>Eukaryota</taxon>
        <taxon>Viridiplantae</taxon>
        <taxon>Streptophyta</taxon>
        <taxon>Embryophyta</taxon>
        <taxon>Tracheophyta</taxon>
        <taxon>Spermatophyta</taxon>
        <taxon>Magnoliopsida</taxon>
        <taxon>eudicotyledons</taxon>
        <taxon>Gunneridae</taxon>
        <taxon>Pentapetalae</taxon>
        <taxon>rosids</taxon>
        <taxon>malvids</taxon>
        <taxon>Brassicales</taxon>
        <taxon>Brassicaceae</taxon>
        <taxon>Camelineae</taxon>
        <taxon>Arabidopsis</taxon>
    </lineage>
</organism>